<organism>
    <name type="scientific">Vibrio cholerae serotype O1 (strain M66-2)</name>
    <dbReference type="NCBI Taxonomy" id="579112"/>
    <lineage>
        <taxon>Bacteria</taxon>
        <taxon>Pseudomonadati</taxon>
        <taxon>Pseudomonadota</taxon>
        <taxon>Gammaproteobacteria</taxon>
        <taxon>Vibrionales</taxon>
        <taxon>Vibrionaceae</taxon>
        <taxon>Vibrio</taxon>
    </lineage>
</organism>
<sequence length="248" mass="27304">MKLAVDTHTHTYASGHAYSTLIENARAAKQNGLTLFCTTDHAESMPGAPHYWFFSNQRILPRFLEGVGVIRGVEANILNTQGEIDLHSSVDHNLDWVIGSFHEPVFHPADKAAHTQALIETIKGGRVDALGHLGNPHFDFDFEQVIACAKTHNVAIEINNSTLKGHSRVGSIDRCYEIARVAKSLDAYITTGSDAHFCLDIGGLSLASQLIDEVGINPQRVITHTARQFLDFLELRGRQPIEEFAGLL</sequence>
<name>Y3654_VIBCM</name>
<protein>
    <recommendedName>
        <fullName evidence="1">Probable phosphatase VCM66_A0854</fullName>
        <ecNumber evidence="1">3.1.3.-</ecNumber>
    </recommendedName>
</protein>
<feature type="chain" id="PRO_1000185435" description="Probable phosphatase VCM66_A0854">
    <location>
        <begin position="1"/>
        <end position="248"/>
    </location>
</feature>
<feature type="binding site" evidence="1">
    <location>
        <position position="8"/>
    </location>
    <ligand>
        <name>Zn(2+)</name>
        <dbReference type="ChEBI" id="CHEBI:29105"/>
        <label>1</label>
    </ligand>
</feature>
<feature type="binding site" evidence="1">
    <location>
        <position position="10"/>
    </location>
    <ligand>
        <name>Zn(2+)</name>
        <dbReference type="ChEBI" id="CHEBI:29105"/>
        <label>1</label>
    </ligand>
</feature>
<feature type="binding site" evidence="1">
    <location>
        <position position="16"/>
    </location>
    <ligand>
        <name>Zn(2+)</name>
        <dbReference type="ChEBI" id="CHEBI:29105"/>
        <label>2</label>
    </ligand>
</feature>
<feature type="binding site" evidence="1">
    <location>
        <position position="41"/>
    </location>
    <ligand>
        <name>Zn(2+)</name>
        <dbReference type="ChEBI" id="CHEBI:29105"/>
        <label>2</label>
    </ligand>
</feature>
<feature type="binding site" evidence="1">
    <location>
        <position position="74"/>
    </location>
    <ligand>
        <name>Zn(2+)</name>
        <dbReference type="ChEBI" id="CHEBI:29105"/>
        <label>1</label>
    </ligand>
</feature>
<feature type="binding site" evidence="1">
    <location>
        <position position="74"/>
    </location>
    <ligand>
        <name>Zn(2+)</name>
        <dbReference type="ChEBI" id="CHEBI:29105"/>
        <label>3</label>
    </ligand>
</feature>
<feature type="binding site" evidence="1">
    <location>
        <position position="102"/>
    </location>
    <ligand>
        <name>Zn(2+)</name>
        <dbReference type="ChEBI" id="CHEBI:29105"/>
        <label>3</label>
    </ligand>
</feature>
<feature type="binding site" evidence="1">
    <location>
        <position position="132"/>
    </location>
    <ligand>
        <name>Zn(2+)</name>
        <dbReference type="ChEBI" id="CHEBI:29105"/>
        <label>3</label>
    </ligand>
</feature>
<feature type="binding site" evidence="1">
    <location>
        <position position="194"/>
    </location>
    <ligand>
        <name>Zn(2+)</name>
        <dbReference type="ChEBI" id="CHEBI:29105"/>
        <label>1</label>
    </ligand>
</feature>
<feature type="binding site" evidence="1">
    <location>
        <position position="196"/>
    </location>
    <ligand>
        <name>Zn(2+)</name>
        <dbReference type="ChEBI" id="CHEBI:29105"/>
        <label>2</label>
    </ligand>
</feature>
<dbReference type="EC" id="3.1.3.-" evidence="1"/>
<dbReference type="EMBL" id="CP001234">
    <property type="protein sequence ID" value="ACP07813.1"/>
    <property type="molecule type" value="Genomic_DNA"/>
</dbReference>
<dbReference type="RefSeq" id="WP_000762055.1">
    <property type="nucleotide sequence ID" value="NC_012580.1"/>
</dbReference>
<dbReference type="SMR" id="C3LWF8"/>
<dbReference type="KEGG" id="vcm:VCM66_A0854"/>
<dbReference type="HOGENOM" id="CLU_061999_0_1_6"/>
<dbReference type="Proteomes" id="UP000001217">
    <property type="component" value="Chromosome II"/>
</dbReference>
<dbReference type="GO" id="GO:0005829">
    <property type="term" value="C:cytosol"/>
    <property type="evidence" value="ECO:0007669"/>
    <property type="project" value="TreeGrafter"/>
</dbReference>
<dbReference type="GO" id="GO:0016791">
    <property type="term" value="F:phosphatase activity"/>
    <property type="evidence" value="ECO:0007669"/>
    <property type="project" value="UniProtKB-UniRule"/>
</dbReference>
<dbReference type="GO" id="GO:0008270">
    <property type="term" value="F:zinc ion binding"/>
    <property type="evidence" value="ECO:0007669"/>
    <property type="project" value="UniProtKB-UniRule"/>
</dbReference>
<dbReference type="GO" id="GO:0071978">
    <property type="term" value="P:bacterial-type flagellum-dependent swarming motility"/>
    <property type="evidence" value="ECO:0007669"/>
    <property type="project" value="TreeGrafter"/>
</dbReference>
<dbReference type="CDD" id="cd07437">
    <property type="entry name" value="PHP_HisPPase_Ycdx_like"/>
    <property type="match status" value="1"/>
</dbReference>
<dbReference type="FunFam" id="3.20.20.140:FF:000008">
    <property type="entry name" value="Probable phosphatase YcdX"/>
    <property type="match status" value="1"/>
</dbReference>
<dbReference type="Gene3D" id="3.20.20.140">
    <property type="entry name" value="Metal-dependent hydrolases"/>
    <property type="match status" value="1"/>
</dbReference>
<dbReference type="HAMAP" id="MF_01561">
    <property type="entry name" value="YcdX_phosphat"/>
    <property type="match status" value="1"/>
</dbReference>
<dbReference type="InterPro" id="IPR023710">
    <property type="entry name" value="Phosphatase_YcdX_put"/>
</dbReference>
<dbReference type="InterPro" id="IPR004013">
    <property type="entry name" value="PHP_dom"/>
</dbReference>
<dbReference type="InterPro" id="IPR050243">
    <property type="entry name" value="PHP_phosphatase"/>
</dbReference>
<dbReference type="InterPro" id="IPR003141">
    <property type="entry name" value="Pol/His_phosphatase_N"/>
</dbReference>
<dbReference type="InterPro" id="IPR016195">
    <property type="entry name" value="Pol/histidinol_Pase-like"/>
</dbReference>
<dbReference type="NCBIfam" id="NF006702">
    <property type="entry name" value="PRK09248.1"/>
    <property type="match status" value="1"/>
</dbReference>
<dbReference type="PANTHER" id="PTHR36928">
    <property type="entry name" value="PHOSPHATASE YCDX-RELATED"/>
    <property type="match status" value="1"/>
</dbReference>
<dbReference type="PANTHER" id="PTHR36928:SF1">
    <property type="entry name" value="PHOSPHATASE YCDX-RELATED"/>
    <property type="match status" value="1"/>
</dbReference>
<dbReference type="Pfam" id="PF02811">
    <property type="entry name" value="PHP"/>
    <property type="match status" value="1"/>
</dbReference>
<dbReference type="SMART" id="SM00481">
    <property type="entry name" value="POLIIIAc"/>
    <property type="match status" value="1"/>
</dbReference>
<dbReference type="SUPFAM" id="SSF89550">
    <property type="entry name" value="PHP domain-like"/>
    <property type="match status" value="1"/>
</dbReference>
<gene>
    <name type="ordered locus">VCM66_A0854</name>
</gene>
<accession>C3LWF8</accession>
<comment type="cofactor">
    <cofactor evidence="1">
        <name>Zn(2+)</name>
        <dbReference type="ChEBI" id="CHEBI:29105"/>
    </cofactor>
    <text evidence="1">Binds 3 Zn(2+) ions per subunit.</text>
</comment>
<comment type="similarity">
    <text evidence="1">Belongs to the PHP family.</text>
</comment>
<reference key="1">
    <citation type="journal article" date="2008" name="PLoS ONE">
        <title>A recalibrated molecular clock and independent origins for the cholera pandemic clones.</title>
        <authorList>
            <person name="Feng L."/>
            <person name="Reeves P.R."/>
            <person name="Lan R."/>
            <person name="Ren Y."/>
            <person name="Gao C."/>
            <person name="Zhou Z."/>
            <person name="Ren Y."/>
            <person name="Cheng J."/>
            <person name="Wang W."/>
            <person name="Wang J."/>
            <person name="Qian W."/>
            <person name="Li D."/>
            <person name="Wang L."/>
        </authorList>
    </citation>
    <scope>NUCLEOTIDE SEQUENCE [LARGE SCALE GENOMIC DNA]</scope>
    <source>
        <strain>M66-2</strain>
    </source>
</reference>
<proteinExistence type="inferred from homology"/>
<evidence type="ECO:0000255" key="1">
    <source>
        <dbReference type="HAMAP-Rule" id="MF_01561"/>
    </source>
</evidence>
<keyword id="KW-0378">Hydrolase</keyword>
<keyword id="KW-0479">Metal-binding</keyword>
<keyword id="KW-0862">Zinc</keyword>